<organism>
    <name type="scientific">Citrus sinensis</name>
    <name type="common">Sweet orange</name>
    <name type="synonym">Citrus aurantium var. sinensis</name>
    <dbReference type="NCBI Taxonomy" id="2711"/>
    <lineage>
        <taxon>Eukaryota</taxon>
        <taxon>Viridiplantae</taxon>
        <taxon>Streptophyta</taxon>
        <taxon>Embryophyta</taxon>
        <taxon>Tracheophyta</taxon>
        <taxon>Spermatophyta</taxon>
        <taxon>Magnoliopsida</taxon>
        <taxon>eudicotyledons</taxon>
        <taxon>Gunneridae</taxon>
        <taxon>Pentapetalae</taxon>
        <taxon>rosids</taxon>
        <taxon>malvids</taxon>
        <taxon>Sapindales</taxon>
        <taxon>Rutaceae</taxon>
        <taxon>Aurantioideae</taxon>
        <taxon>Citrus</taxon>
    </lineage>
</organism>
<geneLocation type="chloroplast"/>
<protein>
    <recommendedName>
        <fullName evidence="1">Potassium/proton antiporter CemA</fullName>
    </recommendedName>
    <alternativeName>
        <fullName evidence="1">Chloroplast envelope membrane protein A</fullName>
        <shortName evidence="1">CemA</shortName>
    </alternativeName>
</protein>
<comment type="function">
    <text evidence="1">Contributes to K(+)/H(+) antiport activity by supporting proton efflux to control proton extrusion and homeostasis in chloroplasts in a light-dependent manner to modulate photosynthesis. Prevents excessive induction of non-photochemical quenching (NPQ) under continuous-light conditions. Indirectly promotes efficient inorganic carbon uptake into chloroplasts.</text>
</comment>
<comment type="catalytic activity">
    <reaction evidence="1">
        <text>K(+)(in) + H(+)(out) = K(+)(out) + H(+)(in)</text>
        <dbReference type="Rhea" id="RHEA:29467"/>
        <dbReference type="ChEBI" id="CHEBI:15378"/>
        <dbReference type="ChEBI" id="CHEBI:29103"/>
    </reaction>
</comment>
<comment type="subcellular location">
    <subcellularLocation>
        <location evidence="1">Plastid</location>
        <location evidence="1">Chloroplast inner membrane</location>
        <topology evidence="1">Multi-pass membrane protein</topology>
    </subcellularLocation>
</comment>
<comment type="similarity">
    <text evidence="1 2">Belongs to the CemA family.</text>
</comment>
<dbReference type="EMBL" id="DQ864733">
    <property type="protein sequence ID" value="ABI49032.1"/>
    <property type="molecule type" value="Genomic_DNA"/>
</dbReference>
<dbReference type="RefSeq" id="YP_740487.1">
    <property type="nucleotide sequence ID" value="NC_008334.1"/>
</dbReference>
<dbReference type="GeneID" id="4271217"/>
<dbReference type="KEGG" id="cit:4271217"/>
<dbReference type="OrthoDB" id="777485at71240"/>
<dbReference type="GO" id="GO:0009706">
    <property type="term" value="C:chloroplast inner membrane"/>
    <property type="evidence" value="ECO:0007669"/>
    <property type="project" value="UniProtKB-SubCell"/>
</dbReference>
<dbReference type="GO" id="GO:0015297">
    <property type="term" value="F:antiporter activity"/>
    <property type="evidence" value="ECO:0007669"/>
    <property type="project" value="UniProtKB-KW"/>
</dbReference>
<dbReference type="GO" id="GO:0015078">
    <property type="term" value="F:proton transmembrane transporter activity"/>
    <property type="evidence" value="ECO:0007669"/>
    <property type="project" value="UniProtKB-UniRule"/>
</dbReference>
<dbReference type="GO" id="GO:0006813">
    <property type="term" value="P:potassium ion transport"/>
    <property type="evidence" value="ECO:0007669"/>
    <property type="project" value="UniProtKB-UniRule"/>
</dbReference>
<dbReference type="HAMAP" id="MF_01308">
    <property type="entry name" value="CemA_PxcA"/>
    <property type="match status" value="1"/>
</dbReference>
<dbReference type="InterPro" id="IPR004282">
    <property type="entry name" value="CemA"/>
</dbReference>
<dbReference type="PANTHER" id="PTHR33650:SF2">
    <property type="entry name" value="CHLOROPLAST ENVELOPE MEMBRANE PROTEIN"/>
    <property type="match status" value="1"/>
</dbReference>
<dbReference type="PANTHER" id="PTHR33650">
    <property type="entry name" value="CHLOROPLAST ENVELOPE MEMBRANE PROTEIN-RELATED"/>
    <property type="match status" value="1"/>
</dbReference>
<dbReference type="Pfam" id="PF03040">
    <property type="entry name" value="CemA"/>
    <property type="match status" value="1"/>
</dbReference>
<keyword id="KW-0050">Antiport</keyword>
<keyword id="KW-0150">Chloroplast</keyword>
<keyword id="KW-0375">Hydrogen ion transport</keyword>
<keyword id="KW-0406">Ion transport</keyword>
<keyword id="KW-0472">Membrane</keyword>
<keyword id="KW-0934">Plastid</keyword>
<keyword id="KW-1001">Plastid inner membrane</keyword>
<keyword id="KW-0630">Potassium</keyword>
<keyword id="KW-0633">Potassium transport</keyword>
<keyword id="KW-0812">Transmembrane</keyword>
<keyword id="KW-1133">Transmembrane helix</keyword>
<keyword id="KW-0813">Transport</keyword>
<accession>Q09MG6</accession>
<gene>
    <name evidence="1" type="primary">cemA</name>
</gene>
<evidence type="ECO:0000255" key="1">
    <source>
        <dbReference type="HAMAP-Rule" id="MF_01308"/>
    </source>
</evidence>
<evidence type="ECO:0000305" key="2"/>
<name>CEMA_CITSI</name>
<reference key="1">
    <citation type="journal article" date="2006" name="BMC Plant Biol.">
        <title>The complete chloroplast genome sequence of Citrus sinensis (L.) Osbeck var 'Ridge Pineapple': organization and phylogenetic relationships to other angiosperms.</title>
        <authorList>
            <person name="Bausher M.G."/>
            <person name="Singh N.D."/>
            <person name="Lee S.-B."/>
            <person name="Jansen R.K."/>
            <person name="Daniell H."/>
        </authorList>
    </citation>
    <scope>NUCLEOTIDE SEQUENCE [LARGE SCALE GENOMIC DNA]</scope>
    <source>
        <strain>cv. Osbeck var. Ridge Pineapple</strain>
    </source>
</reference>
<proteinExistence type="inferred from homology"/>
<feature type="chain" id="PRO_0000275232" description="Potassium/proton antiporter CemA">
    <location>
        <begin position="1"/>
        <end position="234"/>
    </location>
</feature>
<feature type="transmembrane region" description="Helical" evidence="1">
    <location>
        <begin position="8"/>
        <end position="28"/>
    </location>
</feature>
<feature type="transmembrane region" description="Helical" evidence="1">
    <location>
        <begin position="117"/>
        <end position="137"/>
    </location>
</feature>
<feature type="transmembrane region" description="Helical" evidence="1">
    <location>
        <begin position="157"/>
        <end position="177"/>
    </location>
</feature>
<feature type="transmembrane region" description="Helical" evidence="1">
    <location>
        <begin position="193"/>
        <end position="213"/>
    </location>
</feature>
<sequence length="234" mass="27657">MTKKNASIPLRYLSSIVFVVFLPWWIPLSFNKSLESWVTNWWNTSQSETFLNDIQEKAILEKFIELEELFLLDEMIKEFPERRLEKLRIGLQKETIQLIKMHDEDHIHTIFHFSTNTICFVILSGYSILCNEELFILNSWVQEFLYNLSDTIKAFSILFVTDLCIGFHSPRGWELLIGYVYNDFGLAHNDNDIILSVLVSTFPVVLDTFFKYWLFSYLNRVSPSLVVIYHSMTE</sequence>